<keyword id="KW-0032">Aminotransferase</keyword>
<keyword id="KW-0663">Pyridoxal phosphate</keyword>
<keyword id="KW-0808">Transferase</keyword>
<keyword id="KW-0843">Virulence</keyword>
<organism>
    <name type="scientific">Alternaria alternata</name>
    <name type="common">Alternaria rot fungus</name>
    <name type="synonym">Torula alternata</name>
    <dbReference type="NCBI Taxonomy" id="5599"/>
    <lineage>
        <taxon>Eukaryota</taxon>
        <taxon>Fungi</taxon>
        <taxon>Dikarya</taxon>
        <taxon>Ascomycota</taxon>
        <taxon>Pezizomycotina</taxon>
        <taxon>Dothideomycetes</taxon>
        <taxon>Pleosporomycetidae</taxon>
        <taxon>Pleosporales</taxon>
        <taxon>Pleosporineae</taxon>
        <taxon>Pleosporaceae</taxon>
        <taxon>Alternaria</taxon>
        <taxon>Alternaria sect. Alternaria</taxon>
        <taxon>Alternaria alternata complex</taxon>
    </lineage>
</organism>
<feature type="chain" id="PRO_0000444823" description="Transaminase AMT5-2">
    <location>
        <begin position="1"/>
        <end position="373"/>
    </location>
</feature>
<feature type="binding site" evidence="3">
    <location>
        <position position="92"/>
    </location>
    <ligand>
        <name>pyridoxal 5'-phosphate</name>
        <dbReference type="ChEBI" id="CHEBI:597326"/>
    </ligand>
</feature>
<feature type="binding site" evidence="3">
    <location>
        <position position="232"/>
    </location>
    <ligand>
        <name>pyridoxal 5'-phosphate</name>
        <dbReference type="ChEBI" id="CHEBI:597326"/>
    </ligand>
</feature>
<feature type="modified residue" description="N6-(pyridoxal phosphate)lysine" evidence="3">
    <location>
        <position position="196"/>
    </location>
</feature>
<comment type="function">
    <text evidence="1 4 5 6 7 10">Transaminase; part of the gene clusters that mediate the biosynthesis of AM-toxins, host-selective toxins (HSTs) causing Alternaria blotch on apple, a worldwide distributed disease (By similarity). AM-toxins are cyclic depsipeptides containing the 3 residues 2-hydroxy-isovaleric acid (2-HIV), dehydroalanine, L-alanine which are common for all 3 AM-toxins I to III. The fourth precursor is L-alpha-amino-methoxyphenyl-valeric acid (L-Amv) for AM-toxin I, L-alpha-amino-phenyl-valeric acid (L-Apv) for AM-toxin II, and L-alpha-amino-hydroxyphenyl-valeric acid (L-Ahv) for AM-toxin III (Probable). AM-toxins have two target sites for affecting susceptible apple cells; they cause invagination of the plasma membrane and electrolyte loss and chloroplast disorganization (PubMed:22846083). The non-ribosomal peptide synthetase AMT1 contains 4 catalytic modules and is responsible for activation of each residue in AM-toxin (PubMed:10875335). The aldo-keto reductase AMT2 catalyzes the conversion of 2-keto-isovaleric acid (2-KIV) to 2-hydroxy-isovaleric acid (2-HIV), one of the precursor residues incorporated by AMT1 during AM-toxin biosynthesis, by reduction of its ketone to an alcohol (PubMed:15066029). The cytochrome P450 monooxygenase AMT3 and the thioesterase AMT4 are also important for AM-toxin production, but their exact function within the AM-toxin biosynthesis are not known yet (PubMed:17990954). Up to 21 proteins (including AMT1 to AMT4) are predicted to be involved in AM-toxin biosynthesis since their expression ishighly up-regulated in AM-toxin-producing cultures (PubMed:17990954).</text>
</comment>
<comment type="cofactor">
    <cofactor evidence="3">
        <name>pyridoxal 5'-phosphate</name>
        <dbReference type="ChEBI" id="CHEBI:597326"/>
    </cofactor>
</comment>
<comment type="pathway">
    <text evidence="2">Mycotoxin biosynthesis.</text>
</comment>
<comment type="miscellaneous">
    <text evidence="6">Gene clusters encoding host-selective toxins (HSTs) are localized on conditionally dispensable chromosomes (CDCs), also called supernumerary chromosomes, where they are present in multiple copies (PubMed:17990954). The CDCs are not essential for saprophytic growth but controls host-selective pathogenicity (PubMed:17990954).</text>
</comment>
<comment type="similarity">
    <text evidence="9">Belongs to the class-IV pyridoxal-phosphate-dependent aminotransferase family.</text>
</comment>
<gene>
    <name evidence="8" type="primary">AMT5-2</name>
</gene>
<name>AMT52_ALTAL</name>
<protein>
    <recommendedName>
        <fullName evidence="2">Transaminase AMT5-2</fullName>
        <ecNumber evidence="2">2.6.1.-</ecNumber>
    </recommendedName>
    <alternativeName>
        <fullName evidence="8">AM-toxin biosynthesis protein 5-2</fullName>
    </alternativeName>
</protein>
<proteinExistence type="inferred from homology"/>
<evidence type="ECO:0000250" key="1">
    <source>
        <dbReference type="UniProtKB" id="C9K7B6"/>
    </source>
</evidence>
<evidence type="ECO:0000250" key="2">
    <source>
        <dbReference type="UniProtKB" id="K0E3V3"/>
    </source>
</evidence>
<evidence type="ECO:0000250" key="3">
    <source>
        <dbReference type="UniProtKB" id="P19938"/>
    </source>
</evidence>
<evidence type="ECO:0000269" key="4">
    <source>
    </source>
</evidence>
<evidence type="ECO:0000269" key="5">
    <source>
    </source>
</evidence>
<evidence type="ECO:0000269" key="6">
    <source>
    </source>
</evidence>
<evidence type="ECO:0000303" key="7">
    <source>
    </source>
</evidence>
<evidence type="ECO:0000303" key="8">
    <source ref="1"/>
</evidence>
<evidence type="ECO:0000305" key="9"/>
<evidence type="ECO:0000305" key="10">
    <source>
    </source>
</evidence>
<reference key="1">
    <citation type="submission" date="2009-10" db="EMBL/GenBank/DDBJ databases">
        <title>A Zn(II)2Cys6 transcription regulator encoded by the AMT gene cluster negatively controls AM-toxin production in the apple pathotype of Alternaria alternata.</title>
        <authorList>
            <person name="Harimoto Y."/>
            <person name="Kodama M."/>
            <person name="Yamamoto M."/>
            <person name="Otani H."/>
            <person name="Tsuge T."/>
        </authorList>
    </citation>
    <scope>NUCLEOTIDE SEQUENCE [GENOMIC DNA]</scope>
    <source>
        <strain>NBRC 8984</strain>
    </source>
</reference>
<reference key="2">
    <citation type="journal article" date="2000" name="Mol. Plant Microbe Interact.">
        <title>Cloning and characterization of a cyclic peptide synthetase gene from Alternaria alternata apple pathotype whose product is involved in AM-toxin synthesis and pathogenicity.</title>
        <authorList>
            <person name="Johnson R.D."/>
            <person name="Johnson L."/>
            <person name="Itoh Y."/>
            <person name="Kodama M."/>
            <person name="Otani H."/>
            <person name="Kohmoto K."/>
        </authorList>
    </citation>
    <scope>FUNCTION</scope>
    <source>
        <strain>M-71</strain>
    </source>
</reference>
<reference key="3">
    <citation type="journal article" date="2004" name="Mol. Microbiol.">
        <title>Dissection of the host range of the fungal plant pathogen Alternaria alternata by modification of secondary metabolism.</title>
        <authorList>
            <person name="Ito K."/>
            <person name="Tanaka T."/>
            <person name="Hatta R."/>
            <person name="Yamamoto M."/>
            <person name="Akimitsu K."/>
            <person name="Tsuge T."/>
        </authorList>
    </citation>
    <scope>FUNCTION</scope>
    <source>
        <strain>NBRC 8984</strain>
    </source>
</reference>
<reference key="4">
    <citation type="journal article" date="2007" name="Mol. Plant Microbe Interact.">
        <title>Expression profiles of genes encoded by the supernumerary chromosome controlling AM-toxin biosynthesis and pathogenicity in the apple pathotype of Alternaria alternata.</title>
        <authorList>
            <person name="Harimoto Y."/>
            <person name="Hatta R."/>
            <person name="Kodama M."/>
            <person name="Yamamoto M."/>
            <person name="Otani H."/>
            <person name="Tsuge T."/>
        </authorList>
    </citation>
    <scope>FUNCTION</scope>
    <source>
        <strain>NBRC 8984</strain>
    </source>
</reference>
<reference key="5">
    <citation type="journal article" date="2013" name="FEMS Microbiol. Rev.">
        <title>Host-selective toxins produced by the plant pathogenic fungus Alternaria alternata.</title>
        <authorList>
            <person name="Tsuge T."/>
            <person name="Harimoto Y."/>
            <person name="Akimitsu K."/>
            <person name="Ohtani K."/>
            <person name="Kodama M."/>
            <person name="Akagi Y."/>
            <person name="Egusa M."/>
            <person name="Yamamoto M."/>
            <person name="Otani H."/>
        </authorList>
    </citation>
    <scope>REVIEW ON HOST-SELECTIVE TOXINS</scope>
</reference>
<dbReference type="EC" id="2.6.1.-" evidence="2"/>
<dbReference type="EMBL" id="AB525199">
    <property type="protein sequence ID" value="BAI44762.1"/>
    <property type="molecule type" value="Genomic_DNA"/>
</dbReference>
<dbReference type="SMR" id="C9K7D8"/>
<dbReference type="VEuPathDB" id="FungiDB:CC77DRAFT_1020056"/>
<dbReference type="GO" id="GO:0004084">
    <property type="term" value="F:branched-chain-amino-acid transaminase activity"/>
    <property type="evidence" value="ECO:0007669"/>
    <property type="project" value="InterPro"/>
</dbReference>
<dbReference type="GO" id="GO:0009081">
    <property type="term" value="P:branched-chain amino acid metabolic process"/>
    <property type="evidence" value="ECO:0007669"/>
    <property type="project" value="InterPro"/>
</dbReference>
<dbReference type="Gene3D" id="3.30.470.10">
    <property type="match status" value="1"/>
</dbReference>
<dbReference type="Gene3D" id="3.20.10.10">
    <property type="entry name" value="D-amino Acid Aminotransferase, subunit A, domain 2"/>
    <property type="match status" value="1"/>
</dbReference>
<dbReference type="InterPro" id="IPR001544">
    <property type="entry name" value="Aminotrans_IV"/>
</dbReference>
<dbReference type="InterPro" id="IPR036038">
    <property type="entry name" value="Aminotransferase-like"/>
</dbReference>
<dbReference type="InterPro" id="IPR005786">
    <property type="entry name" value="B_amino_transII"/>
</dbReference>
<dbReference type="InterPro" id="IPR043132">
    <property type="entry name" value="BCAT-like_C"/>
</dbReference>
<dbReference type="InterPro" id="IPR043131">
    <property type="entry name" value="BCAT-like_N"/>
</dbReference>
<dbReference type="PANTHER" id="PTHR42825">
    <property type="entry name" value="AMINO ACID AMINOTRANSFERASE"/>
    <property type="match status" value="1"/>
</dbReference>
<dbReference type="PANTHER" id="PTHR42825:SF2">
    <property type="entry name" value="BRANCHED-CHAIN-AMINO-ACID AMINOTRANSFERASE 3, CHLOROPLASTIC-RELATED"/>
    <property type="match status" value="1"/>
</dbReference>
<dbReference type="Pfam" id="PF01063">
    <property type="entry name" value="Aminotran_4"/>
    <property type="match status" value="1"/>
</dbReference>
<dbReference type="PIRSF" id="PIRSF006468">
    <property type="entry name" value="BCAT1"/>
    <property type="match status" value="1"/>
</dbReference>
<dbReference type="SUPFAM" id="SSF56752">
    <property type="entry name" value="D-aminoacid aminotransferase-like PLP-dependent enzymes"/>
    <property type="match status" value="1"/>
</dbReference>
<sequence>MASYGFPLTASSLVDWTSLTFSPIEVNGHIQCTYSPEVAEWGAPHFVKDPYLRVHGLAPALNYGQQIFEGMKAFRTPTGSIRLFRPKMNAVRFAHSASFVAIPPVPEALFLRAVHLAVGLNSEFVPPYDSRGSALYIRPIAFASSATANLAPADHFTFCVFVMPVAPLSTGAGQGLRALVVEDVDRAAPKGTGSAKVGGNYAPIVTTMQRAKADGYGLTLHLDSATHTMVDEFSASGFIGVRVDAGKTTMVVPDSPTILRSITVDSMCRIAESFGWQVQRRAVSFTELAELSEAFAVGTAFILTPVRAITRPCTHTCIEYTADYRSSASAYTRLLETLQGIQQGWLDDAWGWTEEVQDPSSDEFITDTVQARR</sequence>
<accession>C9K7D8</accession>